<comment type="function">
    <text evidence="1">The metallothioneins are involved in the cellular sequestration of toxic metal ions.</text>
</comment>
<comment type="induction">
    <text>By cadmium.</text>
</comment>
<comment type="similarity">
    <text evidence="3">Belongs to the metallothionein superfamily. Type 2 family.</text>
</comment>
<reference key="1">
    <citation type="submission" date="1996-09" db="EMBL/GenBank/DDBJ databases">
        <authorList>
            <person name="Sczekan S.R."/>
            <person name="Engelken J."/>
            <person name="Hildebrandt A."/>
        </authorList>
    </citation>
    <scope>NUCLEOTIDE SEQUENCE [MRNA]</scope>
</reference>
<reference key="2">
    <citation type="submission" date="1997-07" db="UniProtKB">
        <authorList>
            <person name="Sczekan S.R."/>
            <person name="Engelken J."/>
            <person name="Hildebrandt A."/>
        </authorList>
    </citation>
    <scope>PROTEIN SEQUENCE OF 2-40</scope>
</reference>
<evidence type="ECO:0000250" key="1"/>
<evidence type="ECO:0000250" key="2">
    <source>
        <dbReference type="UniProtKB" id="P33187"/>
    </source>
</evidence>
<evidence type="ECO:0000305" key="3"/>
<sequence>MSDPCNCVETGDCRCADGSCSDCSNCKCGDSCKCSKPNCCGKNVTCKCGENCQCGVGCTGPDSCTCDSGCSCK</sequence>
<proteinExistence type="evidence at protein level"/>
<organism>
    <name type="scientific">Dreissena polymorpha</name>
    <name type="common">Zebra mussel</name>
    <name type="synonym">Mytilus polymorpha</name>
    <dbReference type="NCBI Taxonomy" id="45954"/>
    <lineage>
        <taxon>Eukaryota</taxon>
        <taxon>Metazoa</taxon>
        <taxon>Spiralia</taxon>
        <taxon>Lophotrochozoa</taxon>
        <taxon>Mollusca</taxon>
        <taxon>Bivalvia</taxon>
        <taxon>Autobranchia</taxon>
        <taxon>Heteroconchia</taxon>
        <taxon>Euheterodonta</taxon>
        <taxon>Imparidentia</taxon>
        <taxon>Neoheterodontei</taxon>
        <taxon>Myida</taxon>
        <taxon>Dreissenoidea</taxon>
        <taxon>Dreissenidae</taxon>
        <taxon>Dreissena</taxon>
    </lineage>
</organism>
<name>MT_DREPO</name>
<feature type="chain" id="PRO_0000197323" description="Metallothionein">
    <location>
        <begin position="1"/>
        <end position="73"/>
    </location>
</feature>
<feature type="binding site" evidence="2">
    <location>
        <position position="15"/>
    </location>
    <ligand>
        <name>Cd(2+)</name>
        <dbReference type="ChEBI" id="CHEBI:48775"/>
        <label>1</label>
    </ligand>
</feature>
<feature type="binding site" evidence="2">
    <location>
        <position position="20"/>
    </location>
    <ligand>
        <name>Cd(2+)</name>
        <dbReference type="ChEBI" id="CHEBI:48775"/>
        <label>1</label>
    </ligand>
</feature>
<feature type="binding site" evidence="2">
    <location>
        <position position="20"/>
    </location>
    <ligand>
        <name>Cd(2+)</name>
        <dbReference type="ChEBI" id="CHEBI:48775"/>
        <label>2</label>
    </ligand>
</feature>
<feature type="binding site" evidence="2">
    <location>
        <position position="26"/>
    </location>
    <ligand>
        <name>Cd(2+)</name>
        <dbReference type="ChEBI" id="CHEBI:48775"/>
        <label>2</label>
    </ligand>
</feature>
<feature type="binding site" evidence="2">
    <location>
        <position position="28"/>
    </location>
    <ligand>
        <name>Cd(2+)</name>
        <dbReference type="ChEBI" id="CHEBI:48775"/>
        <label>3</label>
    </ligand>
</feature>
<feature type="binding site" evidence="2">
    <location>
        <position position="32"/>
    </location>
    <ligand>
        <name>Cd(2+)</name>
        <dbReference type="ChEBI" id="CHEBI:48775"/>
        <label>3</label>
    </ligand>
</feature>
<feature type="binding site" evidence="2">
    <location>
        <position position="34"/>
    </location>
    <ligand>
        <name>Cd(2+)</name>
        <dbReference type="ChEBI" id="CHEBI:48775"/>
        <label>1</label>
    </ligand>
</feature>
<feature type="binding site" evidence="2">
    <location>
        <position position="34"/>
    </location>
    <ligand>
        <name>Cd(2+)</name>
        <dbReference type="ChEBI" id="CHEBI:48775"/>
        <label>3</label>
    </ligand>
</feature>
<feature type="binding site" evidence="2">
    <location>
        <position position="39"/>
    </location>
    <ligand>
        <name>Cd(2+)</name>
        <dbReference type="ChEBI" id="CHEBI:48775"/>
        <label>2</label>
    </ligand>
</feature>
<feature type="binding site" evidence="2">
    <location>
        <position position="46"/>
    </location>
    <ligand>
        <name>Cd(2+)</name>
        <dbReference type="ChEBI" id="CHEBI:48775"/>
        <label>4</label>
    </ligand>
</feature>
<feature type="binding site" evidence="2">
    <location>
        <position position="48"/>
    </location>
    <ligand>
        <name>Cd(2+)</name>
        <dbReference type="ChEBI" id="CHEBI:48775"/>
        <label>5</label>
    </ligand>
</feature>
<feature type="binding site" evidence="2">
    <location>
        <position position="52"/>
    </location>
    <ligand>
        <name>Cd(2+)</name>
        <dbReference type="ChEBI" id="CHEBI:48775"/>
        <label>5</label>
    </ligand>
</feature>
<feature type="binding site" evidence="2">
    <location>
        <position position="54"/>
    </location>
    <ligand>
        <name>Cd(2+)</name>
        <dbReference type="ChEBI" id="CHEBI:48775"/>
        <label>5</label>
    </ligand>
</feature>
<feature type="binding site" evidence="2">
    <location>
        <position position="54"/>
    </location>
    <ligand>
        <name>Cd(2+)</name>
        <dbReference type="ChEBI" id="CHEBI:48775"/>
        <label>6</label>
    </ligand>
</feature>
<feature type="binding site" evidence="2">
    <location>
        <position position="58"/>
    </location>
    <ligand>
        <name>Cd(2+)</name>
        <dbReference type="ChEBI" id="CHEBI:48775"/>
        <label>4</label>
    </ligand>
</feature>
<feature type="binding site" evidence="2">
    <location>
        <position position="58"/>
    </location>
    <ligand>
        <name>Cd(2+)</name>
        <dbReference type="ChEBI" id="CHEBI:48775"/>
        <label>5</label>
    </ligand>
</feature>
<feature type="binding site" evidence="2">
    <location>
        <position position="64"/>
    </location>
    <ligand>
        <name>Cd(2+)</name>
        <dbReference type="ChEBI" id="CHEBI:48775"/>
        <label>4</label>
    </ligand>
</feature>
<feature type="binding site" evidence="2">
    <location>
        <position position="66"/>
    </location>
    <ligand>
        <name>Cd(2+)</name>
        <dbReference type="ChEBI" id="CHEBI:48775"/>
        <label>6</label>
    </ligand>
</feature>
<feature type="binding site" evidence="2">
    <location>
        <position position="70"/>
    </location>
    <ligand>
        <name>Cd(2+)</name>
        <dbReference type="ChEBI" id="CHEBI:48775"/>
        <label>6</label>
    </ligand>
</feature>
<feature type="binding site" evidence="2">
    <location>
        <position position="72"/>
    </location>
    <ligand>
        <name>Cd(2+)</name>
        <dbReference type="ChEBI" id="CHEBI:48775"/>
        <label>4</label>
    </ligand>
</feature>
<feature type="binding site" evidence="2">
    <location>
        <position position="72"/>
    </location>
    <ligand>
        <name>Cd(2+)</name>
        <dbReference type="ChEBI" id="CHEBI:48775"/>
        <label>6</label>
    </ligand>
</feature>
<protein>
    <recommendedName>
        <fullName>Metallothionein</fullName>
        <shortName>MT</shortName>
    </recommendedName>
</protein>
<keyword id="KW-0104">Cadmium</keyword>
<keyword id="KW-0903">Direct protein sequencing</keyword>
<keyword id="KW-0479">Metal-binding</keyword>
<keyword id="KW-0480">Metal-thiolate cluster</keyword>
<dbReference type="EMBL" id="U67347">
    <property type="protein sequence ID" value="AAB07548.1"/>
    <property type="molecule type" value="mRNA"/>
</dbReference>
<dbReference type="RefSeq" id="XP_052244395.1">
    <property type="nucleotide sequence ID" value="XM_052388435.1"/>
</dbReference>
<dbReference type="EnsemblMetazoa" id="XM_052388435.1">
    <property type="protein sequence ID" value="XP_052244395.1"/>
    <property type="gene ID" value="LOC127853706"/>
</dbReference>
<dbReference type="GeneID" id="127853706"/>
<dbReference type="OrthoDB" id="6107303at2759"/>
<dbReference type="GO" id="GO:0046872">
    <property type="term" value="F:metal ion binding"/>
    <property type="evidence" value="ECO:0007669"/>
    <property type="project" value="UniProtKB-KW"/>
</dbReference>
<dbReference type="InterPro" id="IPR001008">
    <property type="entry name" value="Metalthion_mollusc"/>
</dbReference>
<dbReference type="PRINTS" id="PR00875">
    <property type="entry name" value="MTMOLLUSC"/>
</dbReference>
<accession>Q94550</accession>